<sequence length="308" mass="35010">MRKKVLLMGRSGSGKSSMRSIVFSNYVAKDTRRLGATIDIEHSHVRFLGNLVLNLWDCGGQEAFMENYLSAQRDHIFRNVQVLIYVFDVESREFERDLVTFRNCLEATVANSPQARVFCLIHKMDLVQEDLRDLVFEERKAILLETSKDLETTCLATSIWDETLFKAWSAIVYTLIPNTPTLESHLREFAKAAEAAEVILFERTTFLVISSYSSESNPATDAHRFEKISNIVKQFKLSCSKMQAQFTTFELRGGNFSAFIVPYTEDTYILVVIADPEIESAVTLMNIQSARRFIEASKSASDGIQLQP</sequence>
<feature type="chain" id="PRO_0000372337" description="GTP-binding protein gtr1">
    <location>
        <begin position="1"/>
        <end position="308"/>
    </location>
</feature>
<feature type="binding site" evidence="2">
    <location>
        <position position="11"/>
    </location>
    <ligand>
        <name>GTP</name>
        <dbReference type="ChEBI" id="CHEBI:37565"/>
    </ligand>
</feature>
<feature type="binding site" evidence="2">
    <location>
        <position position="14"/>
    </location>
    <ligand>
        <name>GTP</name>
        <dbReference type="ChEBI" id="CHEBI:37565"/>
    </ligand>
</feature>
<feature type="binding site" evidence="2">
    <location>
        <position position="15"/>
    </location>
    <ligand>
        <name>GTP</name>
        <dbReference type="ChEBI" id="CHEBI:37565"/>
    </ligand>
</feature>
<feature type="binding site" evidence="2">
    <location>
        <position position="16"/>
    </location>
    <ligand>
        <name>GTP</name>
        <dbReference type="ChEBI" id="CHEBI:37565"/>
    </ligand>
</feature>
<feature type="binding site" evidence="2">
    <location>
        <position position="17"/>
    </location>
    <ligand>
        <name>GTP</name>
        <dbReference type="ChEBI" id="CHEBI:37565"/>
    </ligand>
</feature>
<feature type="binding site" evidence="2">
    <location>
        <position position="31"/>
    </location>
    <ligand>
        <name>GTP</name>
        <dbReference type="ChEBI" id="CHEBI:37565"/>
    </ligand>
</feature>
<feature type="binding site" evidence="2">
    <location>
        <position position="37"/>
    </location>
    <ligand>
        <name>GTP</name>
        <dbReference type="ChEBI" id="CHEBI:37565"/>
    </ligand>
</feature>
<feature type="binding site" evidence="2">
    <location>
        <position position="60"/>
    </location>
    <ligand>
        <name>GTP</name>
        <dbReference type="ChEBI" id="CHEBI:37565"/>
    </ligand>
</feature>
<feature type="binding site" evidence="2">
    <location>
        <position position="122"/>
    </location>
    <ligand>
        <name>GTP</name>
        <dbReference type="ChEBI" id="CHEBI:37565"/>
    </ligand>
</feature>
<feature type="binding site" evidence="2">
    <location>
        <position position="125"/>
    </location>
    <ligand>
        <name>GTP</name>
        <dbReference type="ChEBI" id="CHEBI:37565"/>
    </ligand>
</feature>
<feature type="binding site" evidence="2">
    <location>
        <position position="159"/>
    </location>
    <ligand>
        <name>GTP</name>
        <dbReference type="ChEBI" id="CHEBI:37565"/>
    </ligand>
</feature>
<feature type="strand" evidence="6">
    <location>
        <begin position="2"/>
        <end position="10"/>
    </location>
</feature>
<feature type="helix" evidence="6">
    <location>
        <begin position="15"/>
        <end position="22"/>
    </location>
</feature>
<feature type="helix" evidence="6">
    <location>
        <begin position="29"/>
        <end position="33"/>
    </location>
</feature>
<feature type="strand" evidence="6">
    <location>
        <begin position="39"/>
        <end position="46"/>
    </location>
</feature>
<feature type="strand" evidence="6">
    <location>
        <begin position="52"/>
        <end position="58"/>
    </location>
</feature>
<feature type="helix" evidence="6">
    <location>
        <begin position="62"/>
        <end position="68"/>
    </location>
</feature>
<feature type="turn" evidence="6">
    <location>
        <begin position="69"/>
        <end position="71"/>
    </location>
</feature>
<feature type="helix" evidence="6">
    <location>
        <begin position="73"/>
        <end position="76"/>
    </location>
</feature>
<feature type="strand" evidence="6">
    <location>
        <begin position="81"/>
        <end position="88"/>
    </location>
</feature>
<feature type="helix" evidence="6">
    <location>
        <begin position="94"/>
        <end position="111"/>
    </location>
</feature>
<feature type="strand" evidence="6">
    <location>
        <begin position="116"/>
        <end position="122"/>
    </location>
</feature>
<feature type="helix" evidence="6">
    <location>
        <begin position="124"/>
        <end position="126"/>
    </location>
</feature>
<feature type="helix" evidence="6">
    <location>
        <begin position="129"/>
        <end position="131"/>
    </location>
</feature>
<feature type="turn" evidence="6">
    <location>
        <begin position="132"/>
        <end position="135"/>
    </location>
</feature>
<feature type="helix" evidence="6">
    <location>
        <begin position="136"/>
        <end position="146"/>
    </location>
</feature>
<feature type="strand" evidence="6">
    <location>
        <begin position="149"/>
        <end position="156"/>
    </location>
</feature>
<feature type="helix" evidence="6">
    <location>
        <begin position="163"/>
        <end position="175"/>
    </location>
</feature>
<feature type="helix" evidence="6">
    <location>
        <begin position="179"/>
        <end position="192"/>
    </location>
</feature>
<feature type="strand" evidence="6">
    <location>
        <begin position="196"/>
        <end position="205"/>
    </location>
</feature>
<feature type="strand" evidence="6">
    <location>
        <begin position="208"/>
        <end position="213"/>
    </location>
</feature>
<feature type="helix" evidence="6">
    <location>
        <begin position="224"/>
        <end position="241"/>
    </location>
</feature>
<feature type="strand" evidence="6">
    <location>
        <begin position="246"/>
        <end position="252"/>
    </location>
</feature>
<feature type="strand" evidence="6">
    <location>
        <begin position="257"/>
        <end position="262"/>
    </location>
</feature>
<feature type="strand" evidence="6">
    <location>
        <begin position="264"/>
        <end position="274"/>
    </location>
</feature>
<feature type="helix" evidence="6">
    <location>
        <begin position="280"/>
        <end position="300"/>
    </location>
</feature>
<protein>
    <recommendedName>
        <fullName>GTP-binding protein gtr1</fullName>
        <ecNumber evidence="3">3.6.5.-</ecNumber>
    </recommendedName>
</protein>
<name>RAGAB_SCHPO</name>
<proteinExistence type="evidence at protein level"/>
<keyword id="KW-0002">3D-structure</keyword>
<keyword id="KW-0963">Cytoplasm</keyword>
<keyword id="KW-0342">GTP-binding</keyword>
<keyword id="KW-0378">Hydrolase</keyword>
<keyword id="KW-0472">Membrane</keyword>
<keyword id="KW-0547">Nucleotide-binding</keyword>
<keyword id="KW-0539">Nucleus</keyword>
<keyword id="KW-1185">Reference proteome</keyword>
<keyword id="KW-0926">Vacuole</keyword>
<accession>O74824</accession>
<organism>
    <name type="scientific">Schizosaccharomyces pombe (strain 972 / ATCC 24843)</name>
    <name type="common">Fission yeast</name>
    <dbReference type="NCBI Taxonomy" id="284812"/>
    <lineage>
        <taxon>Eukaryota</taxon>
        <taxon>Fungi</taxon>
        <taxon>Dikarya</taxon>
        <taxon>Ascomycota</taxon>
        <taxon>Taphrinomycotina</taxon>
        <taxon>Schizosaccharomycetes</taxon>
        <taxon>Schizosaccharomycetales</taxon>
        <taxon>Schizosaccharomycetaceae</taxon>
        <taxon>Schizosaccharomyces</taxon>
    </lineage>
</organism>
<gene>
    <name type="primary">gtr1</name>
    <name type="ORF">SPBC337.13c</name>
</gene>
<dbReference type="EC" id="3.6.5.-" evidence="3"/>
<dbReference type="EMBL" id="CU329671">
    <property type="protein sequence ID" value="CAA21283.1"/>
    <property type="molecule type" value="Genomic_DNA"/>
</dbReference>
<dbReference type="PIR" id="T40266">
    <property type="entry name" value="T40266"/>
</dbReference>
<dbReference type="RefSeq" id="NP_595414.1">
    <property type="nucleotide sequence ID" value="NM_001021321.2"/>
</dbReference>
<dbReference type="PDB" id="8FW5">
    <property type="method" value="EM"/>
    <property type="resolution" value="3.08 A"/>
    <property type="chains" value="D=1-308"/>
</dbReference>
<dbReference type="PDBsum" id="8FW5"/>
<dbReference type="EMDB" id="EMD-29497"/>
<dbReference type="SMR" id="O74824"/>
<dbReference type="BioGRID" id="277470">
    <property type="interactions" value="23"/>
</dbReference>
<dbReference type="FunCoup" id="O74824">
    <property type="interactions" value="194"/>
</dbReference>
<dbReference type="IntAct" id="O74824">
    <property type="interactions" value="1"/>
</dbReference>
<dbReference type="STRING" id="284812.O74824"/>
<dbReference type="PaxDb" id="4896-SPBC337.13c.1"/>
<dbReference type="EnsemblFungi" id="SPBC337.13c.1">
    <property type="protein sequence ID" value="SPBC337.13c.1:pep"/>
    <property type="gene ID" value="SPBC337.13c"/>
</dbReference>
<dbReference type="GeneID" id="2540954"/>
<dbReference type="KEGG" id="spo:2540954"/>
<dbReference type="PomBase" id="SPBC337.13c">
    <property type="gene designation" value="gtr1"/>
</dbReference>
<dbReference type="VEuPathDB" id="FungiDB:SPBC337.13c"/>
<dbReference type="eggNOG" id="KOG3886">
    <property type="taxonomic scope" value="Eukaryota"/>
</dbReference>
<dbReference type="HOGENOM" id="CLU_044099_0_0_1"/>
<dbReference type="InParanoid" id="O74824"/>
<dbReference type="OMA" id="LIPNMQD"/>
<dbReference type="PhylomeDB" id="O74824"/>
<dbReference type="Reactome" id="R-SPO-165159">
    <property type="pathway name" value="MTOR signalling"/>
</dbReference>
<dbReference type="Reactome" id="R-SPO-9639288">
    <property type="pathway name" value="Amino acids regulate mTORC1"/>
</dbReference>
<dbReference type="PRO" id="PR:O74824"/>
<dbReference type="Proteomes" id="UP000002485">
    <property type="component" value="Chromosome II"/>
</dbReference>
<dbReference type="GO" id="GO:0005829">
    <property type="term" value="C:cytosol"/>
    <property type="evidence" value="ECO:0007005"/>
    <property type="project" value="PomBase"/>
</dbReference>
<dbReference type="GO" id="GO:0000329">
    <property type="term" value="C:fungal-type vacuole membrane"/>
    <property type="evidence" value="ECO:0000314"/>
    <property type="project" value="PomBase"/>
</dbReference>
<dbReference type="GO" id="GO:1990131">
    <property type="term" value="C:Gtr1-Gtr2 GTPase complex"/>
    <property type="evidence" value="ECO:0000353"/>
    <property type="project" value="PomBase"/>
</dbReference>
<dbReference type="GO" id="GO:0005634">
    <property type="term" value="C:nucleus"/>
    <property type="evidence" value="ECO:0000318"/>
    <property type="project" value="GO_Central"/>
</dbReference>
<dbReference type="GO" id="GO:0005525">
    <property type="term" value="F:GTP binding"/>
    <property type="evidence" value="ECO:0000318"/>
    <property type="project" value="GO_Central"/>
</dbReference>
<dbReference type="GO" id="GO:0003924">
    <property type="term" value="F:GTPase activity"/>
    <property type="evidence" value="ECO:0000318"/>
    <property type="project" value="GO_Central"/>
</dbReference>
<dbReference type="GO" id="GO:0043539">
    <property type="term" value="F:protein serine/threonine kinase activator activity"/>
    <property type="evidence" value="ECO:0000269"/>
    <property type="project" value="PomBase"/>
</dbReference>
<dbReference type="GO" id="GO:0009267">
    <property type="term" value="P:cellular response to starvation"/>
    <property type="evidence" value="ECO:0000318"/>
    <property type="project" value="GO_Central"/>
</dbReference>
<dbReference type="GO" id="GO:0010507">
    <property type="term" value="P:negative regulation of autophagy"/>
    <property type="evidence" value="ECO:0000318"/>
    <property type="project" value="GO_Central"/>
</dbReference>
<dbReference type="GO" id="GO:0110045">
    <property type="term" value="P:negative regulation of cell cycle switching, mitotic to meiotic cell cycle"/>
    <property type="evidence" value="ECO:0000269"/>
    <property type="project" value="PomBase"/>
</dbReference>
<dbReference type="GO" id="GO:1904262">
    <property type="term" value="P:negative regulation of TORC1 signaling"/>
    <property type="evidence" value="ECO:0000315"/>
    <property type="project" value="PomBase"/>
</dbReference>
<dbReference type="GO" id="GO:1904263">
    <property type="term" value="P:positive regulation of TORC1 signaling"/>
    <property type="evidence" value="ECO:0000315"/>
    <property type="project" value="PomBase"/>
</dbReference>
<dbReference type="CDD" id="cd11384">
    <property type="entry name" value="RagA_like"/>
    <property type="match status" value="1"/>
</dbReference>
<dbReference type="FunFam" id="3.40.50.300:FF:003828">
    <property type="entry name" value="Gtr1/RagA G protein Gtr1"/>
    <property type="match status" value="1"/>
</dbReference>
<dbReference type="FunFam" id="3.30.450.190:FF:000002">
    <property type="entry name" value="Ras-related GTP-binding protein A"/>
    <property type="match status" value="1"/>
</dbReference>
<dbReference type="Gene3D" id="3.30.450.190">
    <property type="match status" value="1"/>
</dbReference>
<dbReference type="Gene3D" id="3.40.50.300">
    <property type="entry name" value="P-loop containing nucleotide triphosphate hydrolases"/>
    <property type="match status" value="1"/>
</dbReference>
<dbReference type="InterPro" id="IPR006762">
    <property type="entry name" value="Gtr1_RagA"/>
</dbReference>
<dbReference type="InterPro" id="IPR027417">
    <property type="entry name" value="P-loop_NTPase"/>
</dbReference>
<dbReference type="InterPro" id="IPR039397">
    <property type="entry name" value="RagA/B"/>
</dbReference>
<dbReference type="PANTHER" id="PTHR11259">
    <property type="entry name" value="RAS-RELATED GTP BINDING RAG/GTR YEAST"/>
    <property type="match status" value="1"/>
</dbReference>
<dbReference type="PANTHER" id="PTHR11259:SF1">
    <property type="entry name" value="RAS-RELATED GTP-BINDING PROTEIN"/>
    <property type="match status" value="1"/>
</dbReference>
<dbReference type="Pfam" id="PF04670">
    <property type="entry name" value="Gtr1_RagA"/>
    <property type="match status" value="1"/>
</dbReference>
<dbReference type="SUPFAM" id="SSF52540">
    <property type="entry name" value="P-loop containing nucleoside triphosphate hydrolases"/>
    <property type="match status" value="1"/>
</dbReference>
<evidence type="ECO:0000250" key="1">
    <source>
        <dbReference type="UniProtKB" id="A0A6A5PR12"/>
    </source>
</evidence>
<evidence type="ECO:0000250" key="2">
    <source>
        <dbReference type="UniProtKB" id="Q00582"/>
    </source>
</evidence>
<evidence type="ECO:0000250" key="3">
    <source>
        <dbReference type="UniProtKB" id="Q7L523"/>
    </source>
</evidence>
<evidence type="ECO:0000269" key="4">
    <source>
    </source>
</evidence>
<evidence type="ECO:0000305" key="5"/>
<evidence type="ECO:0007829" key="6">
    <source>
        <dbReference type="PDB" id="8FW5"/>
    </source>
</evidence>
<reference key="1">
    <citation type="journal article" date="2002" name="Nature">
        <title>The genome sequence of Schizosaccharomyces pombe.</title>
        <authorList>
            <person name="Wood V."/>
            <person name="Gwilliam R."/>
            <person name="Rajandream M.A."/>
            <person name="Lyne M.H."/>
            <person name="Lyne R."/>
            <person name="Stewart A."/>
            <person name="Sgouros J.G."/>
            <person name="Peat N."/>
            <person name="Hayles J."/>
            <person name="Baker S.G."/>
            <person name="Basham D."/>
            <person name="Bowman S."/>
            <person name="Brooks K."/>
            <person name="Brown D."/>
            <person name="Brown S."/>
            <person name="Chillingworth T."/>
            <person name="Churcher C.M."/>
            <person name="Collins M."/>
            <person name="Connor R."/>
            <person name="Cronin A."/>
            <person name="Davis P."/>
            <person name="Feltwell T."/>
            <person name="Fraser A."/>
            <person name="Gentles S."/>
            <person name="Goble A."/>
            <person name="Hamlin N."/>
            <person name="Harris D.E."/>
            <person name="Hidalgo J."/>
            <person name="Hodgson G."/>
            <person name="Holroyd S."/>
            <person name="Hornsby T."/>
            <person name="Howarth S."/>
            <person name="Huckle E.J."/>
            <person name="Hunt S."/>
            <person name="Jagels K."/>
            <person name="James K.D."/>
            <person name="Jones L."/>
            <person name="Jones M."/>
            <person name="Leather S."/>
            <person name="McDonald S."/>
            <person name="McLean J."/>
            <person name="Mooney P."/>
            <person name="Moule S."/>
            <person name="Mungall K.L."/>
            <person name="Murphy L.D."/>
            <person name="Niblett D."/>
            <person name="Odell C."/>
            <person name="Oliver K."/>
            <person name="O'Neil S."/>
            <person name="Pearson D."/>
            <person name="Quail M.A."/>
            <person name="Rabbinowitsch E."/>
            <person name="Rutherford K.M."/>
            <person name="Rutter S."/>
            <person name="Saunders D."/>
            <person name="Seeger K."/>
            <person name="Sharp S."/>
            <person name="Skelton J."/>
            <person name="Simmonds M.N."/>
            <person name="Squares R."/>
            <person name="Squares S."/>
            <person name="Stevens K."/>
            <person name="Taylor K."/>
            <person name="Taylor R.G."/>
            <person name="Tivey A."/>
            <person name="Walsh S.V."/>
            <person name="Warren T."/>
            <person name="Whitehead S."/>
            <person name="Woodward J.R."/>
            <person name="Volckaert G."/>
            <person name="Aert R."/>
            <person name="Robben J."/>
            <person name="Grymonprez B."/>
            <person name="Weltjens I."/>
            <person name="Vanstreels E."/>
            <person name="Rieger M."/>
            <person name="Schaefer M."/>
            <person name="Mueller-Auer S."/>
            <person name="Gabel C."/>
            <person name="Fuchs M."/>
            <person name="Duesterhoeft A."/>
            <person name="Fritzc C."/>
            <person name="Holzer E."/>
            <person name="Moestl D."/>
            <person name="Hilbert H."/>
            <person name="Borzym K."/>
            <person name="Langer I."/>
            <person name="Beck A."/>
            <person name="Lehrach H."/>
            <person name="Reinhardt R."/>
            <person name="Pohl T.M."/>
            <person name="Eger P."/>
            <person name="Zimmermann W."/>
            <person name="Wedler H."/>
            <person name="Wambutt R."/>
            <person name="Purnelle B."/>
            <person name="Goffeau A."/>
            <person name="Cadieu E."/>
            <person name="Dreano S."/>
            <person name="Gloux S."/>
            <person name="Lelaure V."/>
            <person name="Mottier S."/>
            <person name="Galibert F."/>
            <person name="Aves S.J."/>
            <person name="Xiang Z."/>
            <person name="Hunt C."/>
            <person name="Moore K."/>
            <person name="Hurst S.M."/>
            <person name="Lucas M."/>
            <person name="Rochet M."/>
            <person name="Gaillardin C."/>
            <person name="Tallada V.A."/>
            <person name="Garzon A."/>
            <person name="Thode G."/>
            <person name="Daga R.R."/>
            <person name="Cruzado L."/>
            <person name="Jimenez J."/>
            <person name="Sanchez M."/>
            <person name="del Rey F."/>
            <person name="Benito J."/>
            <person name="Dominguez A."/>
            <person name="Revuelta J.L."/>
            <person name="Moreno S."/>
            <person name="Armstrong J."/>
            <person name="Forsburg S.L."/>
            <person name="Cerutti L."/>
            <person name="Lowe T."/>
            <person name="McCombie W.R."/>
            <person name="Paulsen I."/>
            <person name="Potashkin J."/>
            <person name="Shpakovski G.V."/>
            <person name="Ussery D."/>
            <person name="Barrell B.G."/>
            <person name="Nurse P."/>
        </authorList>
    </citation>
    <scope>NUCLEOTIDE SEQUENCE [LARGE SCALE GENOMIC DNA]</scope>
    <source>
        <strain>972 / ATCC 24843</strain>
    </source>
</reference>
<reference key="2">
    <citation type="journal article" date="2006" name="Nat. Biotechnol.">
        <title>ORFeome cloning and global analysis of protein localization in the fission yeast Schizosaccharomyces pombe.</title>
        <authorList>
            <person name="Matsuyama A."/>
            <person name="Arai R."/>
            <person name="Yashiroda Y."/>
            <person name="Shirai A."/>
            <person name="Kamata A."/>
            <person name="Sekido S."/>
            <person name="Kobayashi Y."/>
            <person name="Hashimoto A."/>
            <person name="Hamamoto M."/>
            <person name="Hiraoka Y."/>
            <person name="Horinouchi S."/>
            <person name="Yoshida M."/>
        </authorList>
    </citation>
    <scope>SUBCELLULAR LOCATION [LARGE SCALE ANALYSIS]</scope>
</reference>
<comment type="function">
    <text evidence="1 2">GTPase involved in activation of the TORC1 signaling pathway, which promotes growth and represses autophagy in nutrient-rich conditions (By similarity). Also required for TORC1 inactivation during nitrogen starvation (By similarity).</text>
</comment>
<comment type="catalytic activity">
    <reaction evidence="3">
        <text>GTP + H2O = GDP + phosphate + H(+)</text>
        <dbReference type="Rhea" id="RHEA:19669"/>
        <dbReference type="ChEBI" id="CHEBI:15377"/>
        <dbReference type="ChEBI" id="CHEBI:15378"/>
        <dbReference type="ChEBI" id="CHEBI:37565"/>
        <dbReference type="ChEBI" id="CHEBI:43474"/>
        <dbReference type="ChEBI" id="CHEBI:58189"/>
    </reaction>
    <physiologicalReaction direction="left-to-right" evidence="3">
        <dbReference type="Rhea" id="RHEA:19670"/>
    </physiologicalReaction>
</comment>
<comment type="subunit">
    <text evidence="2">Component of the GSE complex.</text>
</comment>
<comment type="subcellular location">
    <subcellularLocation>
        <location evidence="1">Vacuole membrane</location>
        <topology evidence="5">Peripheral membrane protein</topology>
    </subcellularLocation>
    <subcellularLocation>
        <location evidence="4">Cytoplasm</location>
    </subcellularLocation>
    <subcellularLocation>
        <location evidence="4">Nucleus</location>
    </subcellularLocation>
</comment>
<comment type="similarity">
    <text evidence="5">Belongs to the GTR/RAG GTP-binding protein family.</text>
</comment>